<organism>
    <name type="scientific">Escherichia coli (strain K12 / MC4100 / BW2952)</name>
    <dbReference type="NCBI Taxonomy" id="595496"/>
    <lineage>
        <taxon>Bacteria</taxon>
        <taxon>Pseudomonadati</taxon>
        <taxon>Pseudomonadota</taxon>
        <taxon>Gammaproteobacteria</taxon>
        <taxon>Enterobacterales</taxon>
        <taxon>Enterobacteriaceae</taxon>
        <taxon>Escherichia</taxon>
    </lineage>
</organism>
<reference key="1">
    <citation type="journal article" date="2009" name="J. Bacteriol.">
        <title>Genomic sequencing reveals regulatory mutations and recombinational events in the widely used MC4100 lineage of Escherichia coli K-12.</title>
        <authorList>
            <person name="Ferenci T."/>
            <person name="Zhou Z."/>
            <person name="Betteridge T."/>
            <person name="Ren Y."/>
            <person name="Liu Y."/>
            <person name="Feng L."/>
            <person name="Reeves P.R."/>
            <person name="Wang L."/>
        </authorList>
    </citation>
    <scope>NUCLEOTIDE SEQUENCE [LARGE SCALE GENOMIC DNA]</scope>
    <source>
        <strain>K12 / MC4100 / BW2952</strain>
    </source>
</reference>
<gene>
    <name evidence="1" type="primary">ghrA</name>
    <name type="ordered locus">BWG_0882</name>
</gene>
<keyword id="KW-0963">Cytoplasm</keyword>
<keyword id="KW-0520">NAD</keyword>
<keyword id="KW-0521">NADP</keyword>
<keyword id="KW-0560">Oxidoreductase</keyword>
<proteinExistence type="inferred from homology"/>
<name>GHRA_ECOBW</name>
<protein>
    <recommendedName>
        <fullName evidence="1">Glyoxylate/hydroxypyruvate reductase A</fullName>
        <ecNumber evidence="1">1.1.1.79</ecNumber>
        <ecNumber evidence="1">1.1.1.81</ecNumber>
    </recommendedName>
    <alternativeName>
        <fullName evidence="1">2-ketoacid reductase</fullName>
    </alternativeName>
</protein>
<evidence type="ECO:0000255" key="1">
    <source>
        <dbReference type="HAMAP-Rule" id="MF_01666"/>
    </source>
</evidence>
<accession>C4ZRX4</accession>
<dbReference type="EC" id="1.1.1.79" evidence="1"/>
<dbReference type="EC" id="1.1.1.81" evidence="1"/>
<dbReference type="EMBL" id="CP001396">
    <property type="protein sequence ID" value="ACR61771.1"/>
    <property type="molecule type" value="Genomic_DNA"/>
</dbReference>
<dbReference type="RefSeq" id="WP_000351317.1">
    <property type="nucleotide sequence ID" value="NC_012759.1"/>
</dbReference>
<dbReference type="SMR" id="C4ZRX4"/>
<dbReference type="GeneID" id="93776385"/>
<dbReference type="KEGG" id="ebw:BWG_0882"/>
<dbReference type="HOGENOM" id="CLU_019796_1_0_6"/>
<dbReference type="GO" id="GO:0005829">
    <property type="term" value="C:cytosol"/>
    <property type="evidence" value="ECO:0007669"/>
    <property type="project" value="UniProtKB-ARBA"/>
</dbReference>
<dbReference type="GO" id="GO:0030267">
    <property type="term" value="F:glyoxylate reductase (NADPH) activity"/>
    <property type="evidence" value="ECO:0007669"/>
    <property type="project" value="UniProtKB-UniRule"/>
</dbReference>
<dbReference type="GO" id="GO:0008465">
    <property type="term" value="F:hydroxypyruvate reductase (NADH) activity"/>
    <property type="evidence" value="ECO:0007669"/>
    <property type="project" value="RHEA"/>
</dbReference>
<dbReference type="GO" id="GO:0120509">
    <property type="term" value="F:hydroxypyruvate reductase (NADPH) activity"/>
    <property type="evidence" value="ECO:0007669"/>
    <property type="project" value="RHEA"/>
</dbReference>
<dbReference type="GO" id="GO:0051287">
    <property type="term" value="F:NAD binding"/>
    <property type="evidence" value="ECO:0007669"/>
    <property type="project" value="InterPro"/>
</dbReference>
<dbReference type="CDD" id="cd12164">
    <property type="entry name" value="GDH_like_2"/>
    <property type="match status" value="1"/>
</dbReference>
<dbReference type="FunFam" id="3.40.50.720:FF:000110">
    <property type="entry name" value="Glyoxylate/hydroxypyruvate reductase A"/>
    <property type="match status" value="1"/>
</dbReference>
<dbReference type="Gene3D" id="3.40.50.720">
    <property type="entry name" value="NAD(P)-binding Rossmann-like Domain"/>
    <property type="match status" value="2"/>
</dbReference>
<dbReference type="HAMAP" id="MF_01666">
    <property type="entry name" value="2_Hacid_dh_C_GhrA"/>
    <property type="match status" value="1"/>
</dbReference>
<dbReference type="InterPro" id="IPR029753">
    <property type="entry name" value="D-isomer_DH_CS"/>
</dbReference>
<dbReference type="InterPro" id="IPR006140">
    <property type="entry name" value="D-isomer_DH_NAD-bd"/>
</dbReference>
<dbReference type="InterPro" id="IPR023514">
    <property type="entry name" value="GhrA_Enterobacterales"/>
</dbReference>
<dbReference type="InterPro" id="IPR036291">
    <property type="entry name" value="NAD(P)-bd_dom_sf"/>
</dbReference>
<dbReference type="NCBIfam" id="NF012013">
    <property type="entry name" value="PRK15469.1"/>
    <property type="match status" value="1"/>
</dbReference>
<dbReference type="PANTHER" id="PTHR43333">
    <property type="entry name" value="2-HACID_DH_C DOMAIN-CONTAINING PROTEIN"/>
    <property type="match status" value="1"/>
</dbReference>
<dbReference type="PANTHER" id="PTHR43333:SF1">
    <property type="entry name" value="D-ISOMER SPECIFIC 2-HYDROXYACID DEHYDROGENASE NAD-BINDING DOMAIN-CONTAINING PROTEIN"/>
    <property type="match status" value="1"/>
</dbReference>
<dbReference type="Pfam" id="PF02826">
    <property type="entry name" value="2-Hacid_dh_C"/>
    <property type="match status" value="1"/>
</dbReference>
<dbReference type="SUPFAM" id="SSF51735">
    <property type="entry name" value="NAD(P)-binding Rossmann-fold domains"/>
    <property type="match status" value="1"/>
</dbReference>
<dbReference type="PROSITE" id="PS00671">
    <property type="entry name" value="D_2_HYDROXYACID_DH_3"/>
    <property type="match status" value="1"/>
</dbReference>
<comment type="function">
    <text evidence="1">Catalyzes the NADPH-dependent reduction of glyoxylate and hydroxypyruvate into glycolate and glycerate, respectively.</text>
</comment>
<comment type="catalytic activity">
    <reaction evidence="1">
        <text>glycolate + NADP(+) = glyoxylate + NADPH + H(+)</text>
        <dbReference type="Rhea" id="RHEA:10992"/>
        <dbReference type="ChEBI" id="CHEBI:15378"/>
        <dbReference type="ChEBI" id="CHEBI:29805"/>
        <dbReference type="ChEBI" id="CHEBI:36655"/>
        <dbReference type="ChEBI" id="CHEBI:57783"/>
        <dbReference type="ChEBI" id="CHEBI:58349"/>
        <dbReference type="EC" id="1.1.1.79"/>
    </reaction>
</comment>
<comment type="catalytic activity">
    <reaction evidence="1">
        <text>(R)-glycerate + NAD(+) = 3-hydroxypyruvate + NADH + H(+)</text>
        <dbReference type="Rhea" id="RHEA:17905"/>
        <dbReference type="ChEBI" id="CHEBI:15378"/>
        <dbReference type="ChEBI" id="CHEBI:16659"/>
        <dbReference type="ChEBI" id="CHEBI:17180"/>
        <dbReference type="ChEBI" id="CHEBI:57540"/>
        <dbReference type="ChEBI" id="CHEBI:57945"/>
        <dbReference type="EC" id="1.1.1.81"/>
    </reaction>
</comment>
<comment type="catalytic activity">
    <reaction evidence="1">
        <text>(R)-glycerate + NADP(+) = 3-hydroxypyruvate + NADPH + H(+)</text>
        <dbReference type="Rhea" id="RHEA:18657"/>
        <dbReference type="ChEBI" id="CHEBI:15378"/>
        <dbReference type="ChEBI" id="CHEBI:16659"/>
        <dbReference type="ChEBI" id="CHEBI:17180"/>
        <dbReference type="ChEBI" id="CHEBI:57783"/>
        <dbReference type="ChEBI" id="CHEBI:58349"/>
        <dbReference type="EC" id="1.1.1.81"/>
    </reaction>
</comment>
<comment type="subcellular location">
    <subcellularLocation>
        <location evidence="1">Cytoplasm</location>
    </subcellularLocation>
</comment>
<comment type="similarity">
    <text evidence="1">Belongs to the D-isomer specific 2-hydroxyacid dehydrogenase family. GhrA subfamily.</text>
</comment>
<sequence>MDIIFYHPTFDTQWWIEALRKAIPQARVRAWKSGDNDSADYALVWHPPVEMLAGRDLKAVFALGAGVDSILSKLQAHPEMLNPSVPLFRLEDTGMGEQMQEYAVSQVLHWFRRFDDYRIQQNSSHWQPLPEYHREDFTIGILGAGVLGSKVAQSLQTWRFPLRCWSRTRKSWPGVQSFAGREELSAFLSQCRVLINLLPNTPETVGIINQQLLEKLPDGAYLLNLARGVHVVEDDLLAALDSGKVKGAMLDVFNREPLPPESPLWQHPRVTITPHVAAITRPAEAVEYISRTIAQLEKGERVCGQVDRARGY</sequence>
<feature type="chain" id="PRO_1000215878" description="Glyoxylate/hydroxypyruvate reductase A">
    <location>
        <begin position="1"/>
        <end position="312"/>
    </location>
</feature>
<feature type="active site" evidence="1">
    <location>
        <position position="227"/>
    </location>
</feature>
<feature type="active site" description="Proton donor" evidence="1">
    <location>
        <position position="275"/>
    </location>
</feature>